<keyword id="KW-0687">Ribonucleoprotein</keyword>
<keyword id="KW-0689">Ribosomal protein</keyword>
<dbReference type="EMBL" id="CP001403">
    <property type="protein sequence ID" value="ACP46066.1"/>
    <property type="molecule type" value="Genomic_DNA"/>
</dbReference>
<dbReference type="RefSeq" id="WP_012716362.1">
    <property type="nucleotide sequence ID" value="NC_012622.1"/>
</dbReference>
<dbReference type="SMR" id="C3N772"/>
<dbReference type="GeneID" id="7807209"/>
<dbReference type="KEGG" id="siy:YG5714_1809"/>
<dbReference type="HOGENOM" id="CLU_1275302_0_0_2"/>
<dbReference type="Proteomes" id="UP000002308">
    <property type="component" value="Chromosome"/>
</dbReference>
<dbReference type="GO" id="GO:1990904">
    <property type="term" value="C:ribonucleoprotein complex"/>
    <property type="evidence" value="ECO:0007669"/>
    <property type="project" value="UniProtKB-KW"/>
</dbReference>
<dbReference type="GO" id="GO:0005840">
    <property type="term" value="C:ribosome"/>
    <property type="evidence" value="ECO:0007669"/>
    <property type="project" value="UniProtKB-KW"/>
</dbReference>
<dbReference type="GO" id="GO:0003735">
    <property type="term" value="F:structural constituent of ribosome"/>
    <property type="evidence" value="ECO:0007669"/>
    <property type="project" value="InterPro"/>
</dbReference>
<dbReference type="GO" id="GO:0006412">
    <property type="term" value="P:translation"/>
    <property type="evidence" value="ECO:0007669"/>
    <property type="project" value="UniProtKB-UniRule"/>
</dbReference>
<dbReference type="HAMAP" id="MF_00512">
    <property type="entry name" value="Ribosomal_eS6"/>
    <property type="match status" value="1"/>
</dbReference>
<dbReference type="InterPro" id="IPR001377">
    <property type="entry name" value="Ribosomal_eS6"/>
</dbReference>
<dbReference type="InterPro" id="IPR020924">
    <property type="entry name" value="Ribosomal_eS6_arc"/>
</dbReference>
<dbReference type="InterPro" id="IPR018282">
    <property type="entry name" value="Ribosomal_eS6_CS"/>
</dbReference>
<dbReference type="NCBIfam" id="NF003292">
    <property type="entry name" value="PRK04290.1-1"/>
    <property type="match status" value="1"/>
</dbReference>
<dbReference type="PANTHER" id="PTHR11502">
    <property type="entry name" value="40S RIBOSOMAL PROTEIN S6"/>
    <property type="match status" value="1"/>
</dbReference>
<dbReference type="Pfam" id="PF01092">
    <property type="entry name" value="Ribosomal_S6e"/>
    <property type="match status" value="1"/>
</dbReference>
<dbReference type="SMART" id="SM01405">
    <property type="entry name" value="Ribosomal_S6e"/>
    <property type="match status" value="1"/>
</dbReference>
<dbReference type="PROSITE" id="PS00578">
    <property type="entry name" value="RIBOSOMAL_S6E"/>
    <property type="match status" value="1"/>
</dbReference>
<name>RS6E_SACI7</name>
<evidence type="ECO:0000305" key="1"/>
<comment type="similarity">
    <text evidence="1">Belongs to the eukaryotic ribosomal protein eS6 family.</text>
</comment>
<proteinExistence type="inferred from homology"/>
<feature type="chain" id="PRO_0000385512" description="Small ribosomal subunit protein eS6">
    <location>
        <begin position="1"/>
        <end position="214"/>
    </location>
</feature>
<gene>
    <name type="primary">rps6e</name>
    <name type="ordered locus">YG5714_1809</name>
</gene>
<accession>C3N772</accession>
<organism>
    <name type="scientific">Saccharolobus islandicus (strain Y.G.57.14 / Yellowstone #1)</name>
    <name type="common">Sulfolobus islandicus</name>
    <dbReference type="NCBI Taxonomy" id="439386"/>
    <lineage>
        <taxon>Archaea</taxon>
        <taxon>Thermoproteota</taxon>
        <taxon>Thermoprotei</taxon>
        <taxon>Sulfolobales</taxon>
        <taxon>Sulfolobaceae</taxon>
        <taxon>Saccharolobus</taxon>
    </lineage>
</organism>
<sequence>MPDFKIVISDPQSVEPKRIKVKAKANDQIKSIAGEKEGKAVPQAKVNEKTKQLLNIDTLITLEITKQEGDKKVKVKSHFKVEVDNNVPDNEVWISKTMAEKFGAEDFEAIAYRTKTLQISIDQDKATNLVGLKIGDTFEANQLIGLPVKLKITGGSDNSGFPMRFDVTGAAKRKILLSGPPGFYPNEDGERRRKTIRGNTISQEIVQINTIIVR</sequence>
<protein>
    <recommendedName>
        <fullName evidence="1">Small ribosomal subunit protein eS6</fullName>
    </recommendedName>
    <alternativeName>
        <fullName>30S ribosomal protein S6e</fullName>
    </alternativeName>
</protein>
<reference key="1">
    <citation type="journal article" date="2009" name="Proc. Natl. Acad. Sci. U.S.A.">
        <title>Biogeography of the Sulfolobus islandicus pan-genome.</title>
        <authorList>
            <person name="Reno M.L."/>
            <person name="Held N.L."/>
            <person name="Fields C.J."/>
            <person name="Burke P.V."/>
            <person name="Whitaker R.J."/>
        </authorList>
    </citation>
    <scope>NUCLEOTIDE SEQUENCE [LARGE SCALE GENOMIC DNA]</scope>
    <source>
        <strain>Y.G.57.14 / Yellowstone #1</strain>
    </source>
</reference>